<feature type="chain" id="PRO_0000212693" description="MIP18 family protein F45G2.10">
    <location>
        <begin position="1"/>
        <end position="160"/>
    </location>
</feature>
<feature type="region of interest" description="Disordered" evidence="2">
    <location>
        <begin position="1"/>
        <end position="32"/>
    </location>
</feature>
<evidence type="ECO:0000250" key="1"/>
<evidence type="ECO:0000256" key="2">
    <source>
        <dbReference type="SAM" id="MobiDB-lite"/>
    </source>
</evidence>
<evidence type="ECO:0000305" key="3"/>
<organism>
    <name type="scientific">Caenorhabditis elegans</name>
    <dbReference type="NCBI Taxonomy" id="6239"/>
    <lineage>
        <taxon>Eukaryota</taxon>
        <taxon>Metazoa</taxon>
        <taxon>Ecdysozoa</taxon>
        <taxon>Nematoda</taxon>
        <taxon>Chromadorea</taxon>
        <taxon>Rhabditida</taxon>
        <taxon>Rhabditina</taxon>
        <taxon>Rhabditomorpha</taxon>
        <taxon>Rhabditoidea</taxon>
        <taxon>Rhabditidae</taxon>
        <taxon>Peloderinae</taxon>
        <taxon>Caenorhabditis</taxon>
    </lineage>
</organism>
<proteinExistence type="evidence at protein level"/>
<gene>
    <name type="ORF">F45G2.10</name>
</gene>
<name>U195_CAEEL</name>
<keyword id="KW-0159">Chromosome partition</keyword>
<keyword id="KW-1185">Reference proteome</keyword>
<sequence>MGQERLDNANPTLFDSKPRHRPVTGTERDESVEDPIDSWEIFDLIRDINDPEHPYTLEQLNVVQEELIKVFIDEEETFVKVNFTPTIPHCSMATLIGLAIRVKLLRSLHPKVKVSVSITPGSHSTEESINRQLADKERVAAAMENQGLMHAVNECLRVPE</sequence>
<reference key="1">
    <citation type="journal article" date="1998" name="Science">
        <title>Genome sequence of the nematode C. elegans: a platform for investigating biology.</title>
        <authorList>
            <consortium name="The C. elegans sequencing consortium"/>
        </authorList>
    </citation>
    <scope>NUCLEOTIDE SEQUENCE [LARGE SCALE GENOMIC DNA]</scope>
    <source>
        <strain>Bristol N2</strain>
    </source>
</reference>
<dbReference type="EMBL" id="Z93382">
    <property type="protein sequence ID" value="CAB07619.1"/>
    <property type="molecule type" value="Genomic_DNA"/>
</dbReference>
<dbReference type="PIR" id="T22242">
    <property type="entry name" value="T22242"/>
</dbReference>
<dbReference type="SMR" id="O62252"/>
<dbReference type="BioGRID" id="50573">
    <property type="interactions" value="2"/>
</dbReference>
<dbReference type="FunCoup" id="O62252">
    <property type="interactions" value="2247"/>
</dbReference>
<dbReference type="IntAct" id="O62252">
    <property type="interactions" value="1"/>
</dbReference>
<dbReference type="STRING" id="6239.F45G2.10.1"/>
<dbReference type="PaxDb" id="6239-F45G2.10"/>
<dbReference type="PeptideAtlas" id="O62252"/>
<dbReference type="EnsemblMetazoa" id="F45G2.10.1">
    <property type="protein sequence ID" value="F45G2.10.1"/>
    <property type="gene ID" value="WBGene00009736"/>
</dbReference>
<dbReference type="KEGG" id="cel:CELE_F45G2.10"/>
<dbReference type="UCSC" id="F45G2.10">
    <property type="organism name" value="c. elegans"/>
</dbReference>
<dbReference type="AGR" id="WB:WBGene00009736"/>
<dbReference type="CTD" id="185814"/>
<dbReference type="WormBase" id="F45G2.10">
    <property type="protein sequence ID" value="CE16053"/>
    <property type="gene ID" value="WBGene00009736"/>
</dbReference>
<dbReference type="eggNOG" id="KOG3381">
    <property type="taxonomic scope" value="Eukaryota"/>
</dbReference>
<dbReference type="GeneTree" id="ENSGT00390000017697"/>
<dbReference type="HOGENOM" id="CLU_075876_3_1_1"/>
<dbReference type="InParanoid" id="O62252"/>
<dbReference type="OMA" id="NQCISAR"/>
<dbReference type="OrthoDB" id="20105at2759"/>
<dbReference type="PhylomeDB" id="O62252"/>
<dbReference type="PRO" id="PR:O62252"/>
<dbReference type="Proteomes" id="UP000001940">
    <property type="component" value="Chromosome III"/>
</dbReference>
<dbReference type="Bgee" id="WBGene00009736">
    <property type="expression patterns" value="Expressed in germ line (C elegans) and 4 other cell types or tissues"/>
</dbReference>
<dbReference type="GO" id="GO:0097361">
    <property type="term" value="C:cytosolic [4Fe-4S] assembly targeting complex"/>
    <property type="evidence" value="ECO:0000318"/>
    <property type="project" value="GO_Central"/>
</dbReference>
<dbReference type="GO" id="GO:0007059">
    <property type="term" value="P:chromosome segregation"/>
    <property type="evidence" value="ECO:0007669"/>
    <property type="project" value="UniProtKB-KW"/>
</dbReference>
<dbReference type="GO" id="GO:0051604">
    <property type="term" value="P:protein maturation"/>
    <property type="evidence" value="ECO:0007669"/>
    <property type="project" value="InterPro"/>
</dbReference>
<dbReference type="FunFam" id="3.30.300.130:FF:000005">
    <property type="entry name" value="Mitotic spindle-associated mmxd complex subunit"/>
    <property type="match status" value="1"/>
</dbReference>
<dbReference type="Gene3D" id="6.10.250.1280">
    <property type="match status" value="1"/>
</dbReference>
<dbReference type="Gene3D" id="3.30.300.130">
    <property type="entry name" value="Fe-S cluster assembly (FSCA)"/>
    <property type="match status" value="1"/>
</dbReference>
<dbReference type="InterPro" id="IPR034904">
    <property type="entry name" value="FSCA_dom_sf"/>
</dbReference>
<dbReference type="InterPro" id="IPR039796">
    <property type="entry name" value="MIP18"/>
</dbReference>
<dbReference type="InterPro" id="IPR002744">
    <property type="entry name" value="MIP18-like"/>
</dbReference>
<dbReference type="PANTHER" id="PTHR12377:SF0">
    <property type="entry name" value="CYTOSOLIC IRON-SULFUR ASSEMBLY COMPONENT 2B"/>
    <property type="match status" value="1"/>
</dbReference>
<dbReference type="PANTHER" id="PTHR12377">
    <property type="entry name" value="CYTOSOLIC IRON-SULFUR ASSEMBLY COMPONENT 2B-RELATED"/>
    <property type="match status" value="1"/>
</dbReference>
<dbReference type="Pfam" id="PF01883">
    <property type="entry name" value="FeS_assembly_P"/>
    <property type="match status" value="1"/>
</dbReference>
<dbReference type="SUPFAM" id="SSF117916">
    <property type="entry name" value="Fe-S cluster assembly (FSCA) domain-like"/>
    <property type="match status" value="1"/>
</dbReference>
<accession>O62252</accession>
<protein>
    <recommendedName>
        <fullName>MIP18 family protein F45G2.10</fullName>
    </recommendedName>
</protein>
<comment type="function">
    <text evidence="1">May play a role in chromosome segregation through establishment of sister chromatid cohesion.</text>
</comment>
<comment type="interaction">
    <interactant intactId="EBI-367937">
        <id>O62252</id>
    </interactant>
    <interactant intactId="EBI-367932">
        <id>Q9XW12</id>
        <label>Y18D10A.9</label>
    </interactant>
    <organismsDiffer>false</organismsDiffer>
    <experiments>3</experiments>
</comment>
<comment type="similarity">
    <text evidence="3">Belongs to the MIP18 family.</text>
</comment>